<evidence type="ECO:0000250" key="1">
    <source>
        <dbReference type="UniProtKB" id="Q2FXT0"/>
    </source>
</evidence>
<evidence type="ECO:0000255" key="2">
    <source>
        <dbReference type="HAMAP-Rule" id="MF_00539"/>
    </source>
</evidence>
<evidence type="ECO:0000256" key="3">
    <source>
        <dbReference type="SAM" id="MobiDB-lite"/>
    </source>
</evidence>
<evidence type="ECO:0000305" key="4"/>
<name>RL27_BACC7</name>
<dbReference type="EMBL" id="CP001177">
    <property type="protein sequence ID" value="ACJ78271.1"/>
    <property type="molecule type" value="Genomic_DNA"/>
</dbReference>
<dbReference type="SMR" id="B7HQK0"/>
<dbReference type="KEGG" id="bcr:BCAH187_A4575"/>
<dbReference type="HOGENOM" id="CLU_095424_4_0_9"/>
<dbReference type="Proteomes" id="UP000002214">
    <property type="component" value="Chromosome"/>
</dbReference>
<dbReference type="GO" id="GO:0022625">
    <property type="term" value="C:cytosolic large ribosomal subunit"/>
    <property type="evidence" value="ECO:0007669"/>
    <property type="project" value="TreeGrafter"/>
</dbReference>
<dbReference type="GO" id="GO:0003735">
    <property type="term" value="F:structural constituent of ribosome"/>
    <property type="evidence" value="ECO:0007669"/>
    <property type="project" value="InterPro"/>
</dbReference>
<dbReference type="GO" id="GO:0006412">
    <property type="term" value="P:translation"/>
    <property type="evidence" value="ECO:0007669"/>
    <property type="project" value="UniProtKB-UniRule"/>
</dbReference>
<dbReference type="FunFam" id="2.40.50.100:FF:000004">
    <property type="entry name" value="50S ribosomal protein L27"/>
    <property type="match status" value="1"/>
</dbReference>
<dbReference type="Gene3D" id="2.40.50.100">
    <property type="match status" value="1"/>
</dbReference>
<dbReference type="HAMAP" id="MF_00539">
    <property type="entry name" value="Ribosomal_bL27"/>
    <property type="match status" value="1"/>
</dbReference>
<dbReference type="InterPro" id="IPR001684">
    <property type="entry name" value="Ribosomal_bL27"/>
</dbReference>
<dbReference type="InterPro" id="IPR018261">
    <property type="entry name" value="Ribosomal_bL27_CS"/>
</dbReference>
<dbReference type="NCBIfam" id="TIGR00062">
    <property type="entry name" value="L27"/>
    <property type="match status" value="1"/>
</dbReference>
<dbReference type="PANTHER" id="PTHR15893:SF0">
    <property type="entry name" value="LARGE RIBOSOMAL SUBUNIT PROTEIN BL27M"/>
    <property type="match status" value="1"/>
</dbReference>
<dbReference type="PANTHER" id="PTHR15893">
    <property type="entry name" value="RIBOSOMAL PROTEIN L27"/>
    <property type="match status" value="1"/>
</dbReference>
<dbReference type="Pfam" id="PF01016">
    <property type="entry name" value="Ribosomal_L27"/>
    <property type="match status" value="1"/>
</dbReference>
<dbReference type="PRINTS" id="PR00063">
    <property type="entry name" value="RIBOSOMALL27"/>
</dbReference>
<dbReference type="SUPFAM" id="SSF110324">
    <property type="entry name" value="Ribosomal L27 protein-like"/>
    <property type="match status" value="1"/>
</dbReference>
<dbReference type="PROSITE" id="PS00831">
    <property type="entry name" value="RIBOSOMAL_L27"/>
    <property type="match status" value="1"/>
</dbReference>
<organism>
    <name type="scientific">Bacillus cereus (strain AH187)</name>
    <dbReference type="NCBI Taxonomy" id="405534"/>
    <lineage>
        <taxon>Bacteria</taxon>
        <taxon>Bacillati</taxon>
        <taxon>Bacillota</taxon>
        <taxon>Bacilli</taxon>
        <taxon>Bacillales</taxon>
        <taxon>Bacillaceae</taxon>
        <taxon>Bacillus</taxon>
        <taxon>Bacillus cereus group</taxon>
    </lineage>
</organism>
<sequence>MLRLDLQFFASKKGVGSTKNGRDSQSKRLGAKRADGQTVTGGSILYRQRGTKIYPGVNVGRGGDDTLYAKVDGVVRFERLGRDRKQVSVYPVAQEA</sequence>
<reference key="1">
    <citation type="submission" date="2008-10" db="EMBL/GenBank/DDBJ databases">
        <title>Genome sequence of Bacillus cereus AH187.</title>
        <authorList>
            <person name="Dodson R.J."/>
            <person name="Durkin A.S."/>
            <person name="Rosovitz M.J."/>
            <person name="Rasko D.A."/>
            <person name="Kolsto A.B."/>
            <person name="Okstad O.A."/>
            <person name="Ravel J."/>
            <person name="Sutton G."/>
        </authorList>
    </citation>
    <scope>NUCLEOTIDE SEQUENCE [LARGE SCALE GENOMIC DNA]</scope>
    <source>
        <strain>AH187</strain>
    </source>
</reference>
<proteinExistence type="inferred from homology"/>
<keyword id="KW-0687">Ribonucleoprotein</keyword>
<keyword id="KW-0689">Ribosomal protein</keyword>
<protein>
    <recommendedName>
        <fullName evidence="2">Large ribosomal subunit protein bL27</fullName>
    </recommendedName>
    <alternativeName>
        <fullName evidence="4">50S ribosomal protein L27</fullName>
    </alternativeName>
</protein>
<comment type="PTM">
    <text evidence="1">The N-terminus is cleaved by ribosomal processing cysteine protease Prp.</text>
</comment>
<comment type="similarity">
    <text evidence="2">Belongs to the bacterial ribosomal protein bL27 family.</text>
</comment>
<feature type="propeptide" id="PRO_0000459851" evidence="1">
    <location>
        <begin position="1"/>
        <end position="9"/>
    </location>
</feature>
<feature type="chain" id="PRO_1000128694" description="Large ribosomal subunit protein bL27">
    <location>
        <begin position="10"/>
        <end position="96"/>
    </location>
</feature>
<feature type="region of interest" description="Disordered" evidence="3">
    <location>
        <begin position="13"/>
        <end position="35"/>
    </location>
</feature>
<accession>B7HQK0</accession>
<gene>
    <name evidence="2" type="primary">rpmA</name>
    <name type="ordered locus">BCAH187_A4575</name>
</gene>